<accession>Q97ND6</accession>
<proteinExistence type="inferred from homology"/>
<protein>
    <recommendedName>
        <fullName evidence="1">Aspartate--tRNA ligase</fullName>
        <ecNumber evidence="1">6.1.1.12</ecNumber>
    </recommendedName>
    <alternativeName>
        <fullName evidence="1">Aspartyl-tRNA synthetase</fullName>
        <shortName evidence="1">AspRS</shortName>
    </alternativeName>
</protein>
<name>SYD_STRPN</name>
<sequence length="587" mass="66297">MKRSMYAGRVREEHIGQEITLKGWVGRRRDLGGLIFIDLRDREGIMQLVINPEKVSAEVMATAESLRSEFVIEVTGQVAAREQANDKLPTGAVELNVTALIVLNTAKTTPFEIKDGIEANDDTRLRYRYLDLRRPEMLENLKLRAKVTHSIRNYLDELEFIDVETPFLSKSTPEGARDYLVPSRVNKGHFYALPQSPQITKQLLMNAGFDRYYQIVKCFRDEDLRGDRQPEFTQVDLETSFLTEQEIQDITESLIARVMKETKGIEVTLPFPRMKYDDAMALYGSDKPDTRFDMLLQDLTEVVRGVDFKVFSEAPAVKAIVVTGAADNYSRKDIDKMTEVAKQYGAKGLAWVKVVDGELNGPVAKFLTGIQEELTTALVLEDKDLVLFVADTLEVANATLGALRGRIAKELGLIDNDKFNFLWVVDWPMFEWSEEEGRYMSAHHPFTLPQEETAHELEGDLAKVRAIAYDIVLNGYELGGGSLRINQKDLQERMFKALGFSTEEANDQFGFLLEAMDYGFPPHGGLAIGLDRFVMLLAGEENIREVIAFPKNNKATDPMTQAPSTVALKQLEELSLQVEEDETNKTN</sequence>
<dbReference type="EC" id="6.1.1.12" evidence="1"/>
<dbReference type="EMBL" id="AE005672">
    <property type="protein sequence ID" value="AAK76173.1"/>
    <property type="molecule type" value="Genomic_DNA"/>
</dbReference>
<dbReference type="PIR" id="D95247">
    <property type="entry name" value="D95247"/>
</dbReference>
<dbReference type="RefSeq" id="WP_000830893.1">
    <property type="nucleotide sequence ID" value="NZ_CP155539.1"/>
</dbReference>
<dbReference type="SMR" id="Q97ND6"/>
<dbReference type="PaxDb" id="170187-SP_2114"/>
<dbReference type="EnsemblBacteria" id="AAK76173">
    <property type="protein sequence ID" value="AAK76173"/>
    <property type="gene ID" value="SP_2114"/>
</dbReference>
<dbReference type="KEGG" id="spn:SP_2114"/>
<dbReference type="eggNOG" id="COG0173">
    <property type="taxonomic scope" value="Bacteria"/>
</dbReference>
<dbReference type="PhylomeDB" id="Q97ND6"/>
<dbReference type="BioCyc" id="SPNE170187:G1FZB-2203-MONOMER"/>
<dbReference type="Proteomes" id="UP000000585">
    <property type="component" value="Chromosome"/>
</dbReference>
<dbReference type="GO" id="GO:0005737">
    <property type="term" value="C:cytoplasm"/>
    <property type="evidence" value="ECO:0007669"/>
    <property type="project" value="UniProtKB-SubCell"/>
</dbReference>
<dbReference type="GO" id="GO:0004815">
    <property type="term" value="F:aspartate-tRNA ligase activity"/>
    <property type="evidence" value="ECO:0007669"/>
    <property type="project" value="UniProtKB-UniRule"/>
</dbReference>
<dbReference type="GO" id="GO:0005524">
    <property type="term" value="F:ATP binding"/>
    <property type="evidence" value="ECO:0007669"/>
    <property type="project" value="UniProtKB-UniRule"/>
</dbReference>
<dbReference type="GO" id="GO:0140096">
    <property type="term" value="F:catalytic activity, acting on a protein"/>
    <property type="evidence" value="ECO:0007669"/>
    <property type="project" value="UniProtKB-ARBA"/>
</dbReference>
<dbReference type="GO" id="GO:0003676">
    <property type="term" value="F:nucleic acid binding"/>
    <property type="evidence" value="ECO:0007669"/>
    <property type="project" value="InterPro"/>
</dbReference>
<dbReference type="GO" id="GO:0016740">
    <property type="term" value="F:transferase activity"/>
    <property type="evidence" value="ECO:0007669"/>
    <property type="project" value="UniProtKB-ARBA"/>
</dbReference>
<dbReference type="GO" id="GO:0006422">
    <property type="term" value="P:aspartyl-tRNA aminoacylation"/>
    <property type="evidence" value="ECO:0007669"/>
    <property type="project" value="UniProtKB-UniRule"/>
</dbReference>
<dbReference type="CDD" id="cd00777">
    <property type="entry name" value="AspRS_core"/>
    <property type="match status" value="1"/>
</dbReference>
<dbReference type="CDD" id="cd04317">
    <property type="entry name" value="EcAspRS_like_N"/>
    <property type="match status" value="1"/>
</dbReference>
<dbReference type="Gene3D" id="3.30.930.10">
    <property type="entry name" value="Bira Bifunctional Protein, Domain 2"/>
    <property type="match status" value="1"/>
</dbReference>
<dbReference type="Gene3D" id="3.30.1360.30">
    <property type="entry name" value="GAD-like domain"/>
    <property type="match status" value="1"/>
</dbReference>
<dbReference type="Gene3D" id="2.40.50.140">
    <property type="entry name" value="Nucleic acid-binding proteins"/>
    <property type="match status" value="1"/>
</dbReference>
<dbReference type="HAMAP" id="MF_00044">
    <property type="entry name" value="Asp_tRNA_synth_type1"/>
    <property type="match status" value="1"/>
</dbReference>
<dbReference type="InterPro" id="IPR004364">
    <property type="entry name" value="Aa-tRNA-synt_II"/>
</dbReference>
<dbReference type="InterPro" id="IPR006195">
    <property type="entry name" value="aa-tRNA-synth_II"/>
</dbReference>
<dbReference type="InterPro" id="IPR045864">
    <property type="entry name" value="aa-tRNA-synth_II/BPL/LPL"/>
</dbReference>
<dbReference type="InterPro" id="IPR004524">
    <property type="entry name" value="Asp-tRNA-ligase_1"/>
</dbReference>
<dbReference type="InterPro" id="IPR047089">
    <property type="entry name" value="Asp-tRNA-ligase_1_N"/>
</dbReference>
<dbReference type="InterPro" id="IPR002312">
    <property type="entry name" value="Asp/Asn-tRNA-synth_IIb"/>
</dbReference>
<dbReference type="InterPro" id="IPR047090">
    <property type="entry name" value="AspRS_core"/>
</dbReference>
<dbReference type="InterPro" id="IPR004115">
    <property type="entry name" value="GAD-like_sf"/>
</dbReference>
<dbReference type="InterPro" id="IPR029351">
    <property type="entry name" value="GAD_dom"/>
</dbReference>
<dbReference type="InterPro" id="IPR012340">
    <property type="entry name" value="NA-bd_OB-fold"/>
</dbReference>
<dbReference type="InterPro" id="IPR004365">
    <property type="entry name" value="NA-bd_OB_tRNA"/>
</dbReference>
<dbReference type="NCBIfam" id="TIGR00459">
    <property type="entry name" value="aspS_bact"/>
    <property type="match status" value="1"/>
</dbReference>
<dbReference type="NCBIfam" id="NF001750">
    <property type="entry name" value="PRK00476.1"/>
    <property type="match status" value="1"/>
</dbReference>
<dbReference type="PANTHER" id="PTHR22594:SF5">
    <property type="entry name" value="ASPARTATE--TRNA LIGASE, MITOCHONDRIAL"/>
    <property type="match status" value="1"/>
</dbReference>
<dbReference type="PANTHER" id="PTHR22594">
    <property type="entry name" value="ASPARTYL/LYSYL-TRNA SYNTHETASE"/>
    <property type="match status" value="1"/>
</dbReference>
<dbReference type="Pfam" id="PF02938">
    <property type="entry name" value="GAD"/>
    <property type="match status" value="1"/>
</dbReference>
<dbReference type="Pfam" id="PF00152">
    <property type="entry name" value="tRNA-synt_2"/>
    <property type="match status" value="1"/>
</dbReference>
<dbReference type="Pfam" id="PF01336">
    <property type="entry name" value="tRNA_anti-codon"/>
    <property type="match status" value="1"/>
</dbReference>
<dbReference type="PRINTS" id="PR01042">
    <property type="entry name" value="TRNASYNTHASP"/>
</dbReference>
<dbReference type="SUPFAM" id="SSF55681">
    <property type="entry name" value="Class II aaRS and biotin synthetases"/>
    <property type="match status" value="1"/>
</dbReference>
<dbReference type="SUPFAM" id="SSF55261">
    <property type="entry name" value="GAD domain-like"/>
    <property type="match status" value="1"/>
</dbReference>
<dbReference type="SUPFAM" id="SSF50249">
    <property type="entry name" value="Nucleic acid-binding proteins"/>
    <property type="match status" value="1"/>
</dbReference>
<dbReference type="PROSITE" id="PS50862">
    <property type="entry name" value="AA_TRNA_LIGASE_II"/>
    <property type="match status" value="1"/>
</dbReference>
<keyword id="KW-0030">Aminoacyl-tRNA synthetase</keyword>
<keyword id="KW-0067">ATP-binding</keyword>
<keyword id="KW-0963">Cytoplasm</keyword>
<keyword id="KW-0436">Ligase</keyword>
<keyword id="KW-0547">Nucleotide-binding</keyword>
<keyword id="KW-0648">Protein biosynthesis</keyword>
<keyword id="KW-1185">Reference proteome</keyword>
<organism>
    <name type="scientific">Streptococcus pneumoniae serotype 4 (strain ATCC BAA-334 / TIGR4)</name>
    <dbReference type="NCBI Taxonomy" id="170187"/>
    <lineage>
        <taxon>Bacteria</taxon>
        <taxon>Bacillati</taxon>
        <taxon>Bacillota</taxon>
        <taxon>Bacilli</taxon>
        <taxon>Lactobacillales</taxon>
        <taxon>Streptococcaceae</taxon>
        <taxon>Streptococcus</taxon>
    </lineage>
</organism>
<reference key="1">
    <citation type="journal article" date="2001" name="Science">
        <title>Complete genome sequence of a virulent isolate of Streptococcus pneumoniae.</title>
        <authorList>
            <person name="Tettelin H."/>
            <person name="Nelson K.E."/>
            <person name="Paulsen I.T."/>
            <person name="Eisen J.A."/>
            <person name="Read T.D."/>
            <person name="Peterson S.N."/>
            <person name="Heidelberg J.F."/>
            <person name="DeBoy R.T."/>
            <person name="Haft D.H."/>
            <person name="Dodson R.J."/>
            <person name="Durkin A.S."/>
            <person name="Gwinn M.L."/>
            <person name="Kolonay J.F."/>
            <person name="Nelson W.C."/>
            <person name="Peterson J.D."/>
            <person name="Umayam L.A."/>
            <person name="White O."/>
            <person name="Salzberg S.L."/>
            <person name="Lewis M.R."/>
            <person name="Radune D."/>
            <person name="Holtzapple E.K."/>
            <person name="Khouri H.M."/>
            <person name="Wolf A.M."/>
            <person name="Utterback T.R."/>
            <person name="Hansen C.L."/>
            <person name="McDonald L.A."/>
            <person name="Feldblyum T.V."/>
            <person name="Angiuoli S.V."/>
            <person name="Dickinson T."/>
            <person name="Hickey E.K."/>
            <person name="Holt I.E."/>
            <person name="Loftus B.J."/>
            <person name="Yang F."/>
            <person name="Smith H.O."/>
            <person name="Venter J.C."/>
            <person name="Dougherty B.A."/>
            <person name="Morrison D.A."/>
            <person name="Hollingshead S.K."/>
            <person name="Fraser C.M."/>
        </authorList>
    </citation>
    <scope>NUCLEOTIDE SEQUENCE [LARGE SCALE GENOMIC DNA]</scope>
    <source>
        <strain>ATCC BAA-334 / TIGR4</strain>
    </source>
</reference>
<evidence type="ECO:0000255" key="1">
    <source>
        <dbReference type="HAMAP-Rule" id="MF_00044"/>
    </source>
</evidence>
<gene>
    <name evidence="1" type="primary">aspS</name>
    <name type="ordered locus">SP_2114</name>
</gene>
<comment type="function">
    <text evidence="1">Catalyzes the attachment of L-aspartate to tRNA(Asp) in a two-step reaction: L-aspartate is first activated by ATP to form Asp-AMP and then transferred to the acceptor end of tRNA(Asp).</text>
</comment>
<comment type="catalytic activity">
    <reaction evidence="1">
        <text>tRNA(Asp) + L-aspartate + ATP = L-aspartyl-tRNA(Asp) + AMP + diphosphate</text>
        <dbReference type="Rhea" id="RHEA:19649"/>
        <dbReference type="Rhea" id="RHEA-COMP:9660"/>
        <dbReference type="Rhea" id="RHEA-COMP:9678"/>
        <dbReference type="ChEBI" id="CHEBI:29991"/>
        <dbReference type="ChEBI" id="CHEBI:30616"/>
        <dbReference type="ChEBI" id="CHEBI:33019"/>
        <dbReference type="ChEBI" id="CHEBI:78442"/>
        <dbReference type="ChEBI" id="CHEBI:78516"/>
        <dbReference type="ChEBI" id="CHEBI:456215"/>
        <dbReference type="EC" id="6.1.1.12"/>
    </reaction>
</comment>
<comment type="subunit">
    <text evidence="1">Homodimer.</text>
</comment>
<comment type="subcellular location">
    <subcellularLocation>
        <location evidence="1">Cytoplasm</location>
    </subcellularLocation>
</comment>
<comment type="similarity">
    <text evidence="1">Belongs to the class-II aminoacyl-tRNA synthetase family. Type 1 subfamily.</text>
</comment>
<feature type="chain" id="PRO_0000110955" description="Aspartate--tRNA ligase">
    <location>
        <begin position="1"/>
        <end position="587"/>
    </location>
</feature>
<feature type="region of interest" description="Aspartate" evidence="1">
    <location>
        <begin position="198"/>
        <end position="201"/>
    </location>
</feature>
<feature type="binding site" evidence="1">
    <location>
        <position position="174"/>
    </location>
    <ligand>
        <name>L-aspartate</name>
        <dbReference type="ChEBI" id="CHEBI:29991"/>
    </ligand>
</feature>
<feature type="binding site" evidence="1">
    <location>
        <begin position="220"/>
        <end position="222"/>
    </location>
    <ligand>
        <name>ATP</name>
        <dbReference type="ChEBI" id="CHEBI:30616"/>
    </ligand>
</feature>
<feature type="binding site" evidence="1">
    <location>
        <position position="220"/>
    </location>
    <ligand>
        <name>L-aspartate</name>
        <dbReference type="ChEBI" id="CHEBI:29991"/>
    </ligand>
</feature>
<feature type="binding site" evidence="1">
    <location>
        <position position="229"/>
    </location>
    <ligand>
        <name>ATP</name>
        <dbReference type="ChEBI" id="CHEBI:30616"/>
    </ligand>
</feature>
<feature type="binding site" evidence="1">
    <location>
        <position position="443"/>
    </location>
    <ligand>
        <name>L-aspartate</name>
        <dbReference type="ChEBI" id="CHEBI:29991"/>
    </ligand>
</feature>
<feature type="binding site" evidence="1">
    <location>
        <position position="477"/>
    </location>
    <ligand>
        <name>ATP</name>
        <dbReference type="ChEBI" id="CHEBI:30616"/>
    </ligand>
</feature>
<feature type="binding site" evidence="1">
    <location>
        <position position="484"/>
    </location>
    <ligand>
        <name>L-aspartate</name>
        <dbReference type="ChEBI" id="CHEBI:29991"/>
    </ligand>
</feature>
<feature type="binding site" evidence="1">
    <location>
        <begin position="529"/>
        <end position="532"/>
    </location>
    <ligand>
        <name>ATP</name>
        <dbReference type="ChEBI" id="CHEBI:30616"/>
    </ligand>
</feature>